<evidence type="ECO:0000250" key="1"/>
<evidence type="ECO:0000250" key="2">
    <source>
        <dbReference type="UniProtKB" id="O70161"/>
    </source>
</evidence>
<evidence type="ECO:0000250" key="3">
    <source>
        <dbReference type="UniProtKB" id="P70182"/>
    </source>
</evidence>
<evidence type="ECO:0000250" key="4">
    <source>
        <dbReference type="UniProtKB" id="Q5I6B8"/>
    </source>
</evidence>
<evidence type="ECO:0000255" key="5">
    <source>
        <dbReference type="PROSITE-ProRule" id="PRU00781"/>
    </source>
</evidence>
<evidence type="ECO:0000256" key="6">
    <source>
        <dbReference type="SAM" id="MobiDB-lite"/>
    </source>
</evidence>
<evidence type="ECO:0000269" key="7">
    <source>
    </source>
</evidence>
<evidence type="ECO:0000269" key="8">
    <source>
    </source>
</evidence>
<evidence type="ECO:0000269" key="9">
    <source>
    </source>
</evidence>
<evidence type="ECO:0000269" key="10">
    <source>
    </source>
</evidence>
<evidence type="ECO:0000269" key="11">
    <source>
    </source>
</evidence>
<evidence type="ECO:0000269" key="12">
    <source>
    </source>
</evidence>
<evidence type="ECO:0000269" key="13">
    <source>
    </source>
</evidence>
<evidence type="ECO:0000269" key="14">
    <source>
    </source>
</evidence>
<evidence type="ECO:0000269" key="15">
    <source>
    </source>
</evidence>
<evidence type="ECO:0000269" key="16">
    <source>
    </source>
</evidence>
<evidence type="ECO:0000303" key="17">
    <source>
    </source>
</evidence>
<evidence type="ECO:0000303" key="18">
    <source>
    </source>
</evidence>
<evidence type="ECO:0000305" key="19"/>
<evidence type="ECO:0000305" key="20">
    <source>
    </source>
</evidence>
<evidence type="ECO:0000305" key="21">
    <source>
    </source>
</evidence>
<evidence type="ECO:0000305" key="22">
    <source>
    </source>
</evidence>
<evidence type="ECO:0000312" key="23">
    <source>
        <dbReference type="HGNC" id="HGNC:8996"/>
    </source>
</evidence>
<evidence type="ECO:0007829" key="24">
    <source>
        <dbReference type="PDB" id="3H1Z"/>
    </source>
</evidence>
<feature type="chain" id="PRO_0000185462" description="Phosphatidylinositol 4-phosphate 5-kinase type-1 gamma">
    <location>
        <begin position="1"/>
        <end position="668"/>
    </location>
</feature>
<feature type="domain" description="PIPK" evidence="5">
    <location>
        <begin position="75"/>
        <end position="443"/>
    </location>
</feature>
<feature type="region of interest" description="Disordered" evidence="6">
    <location>
        <begin position="45"/>
        <end position="67"/>
    </location>
</feature>
<feature type="region of interest" description="Disordered" evidence="6">
    <location>
        <begin position="526"/>
        <end position="578"/>
    </location>
</feature>
<feature type="region of interest" description="Disordered" evidence="6">
    <location>
        <begin position="593"/>
        <end position="642"/>
    </location>
</feature>
<feature type="region of interest" description="Mediates interaction with TLN2" evidence="7">
    <location>
        <begin position="641"/>
        <end position="668"/>
    </location>
</feature>
<feature type="compositionally biased region" description="Low complexity" evidence="6">
    <location>
        <begin position="526"/>
        <end position="535"/>
    </location>
</feature>
<feature type="modified residue" description="N6-acetyllysine" evidence="14">
    <location>
        <position position="265"/>
    </location>
</feature>
<feature type="modified residue" description="N6-acetyllysine" evidence="14">
    <location>
        <position position="268"/>
    </location>
</feature>
<feature type="modified residue" description="Asymmetric dimethylarginine; alternate" evidence="2">
    <location>
        <position position="459"/>
    </location>
</feature>
<feature type="modified residue" description="Omega-N-methylarginine; alternate" evidence="2">
    <location>
        <position position="459"/>
    </location>
</feature>
<feature type="modified residue" description="Phosphoserine" evidence="4">
    <location>
        <position position="555"/>
    </location>
</feature>
<feature type="modified residue" description="Phosphotyrosine; by EGFR" evidence="2">
    <location>
        <position position="639"/>
    </location>
</feature>
<feature type="modified residue" description="Phosphotyrosine; by CSK" evidence="9">
    <location>
        <position position="649"/>
    </location>
</feature>
<feature type="modified residue" description="Phosphoserine; by CDK5, MAPK1 and CDK1" evidence="9">
    <location>
        <position position="650"/>
    </location>
</feature>
<feature type="modified residue" description="Phosphoserine" evidence="2">
    <location>
        <position position="662"/>
    </location>
</feature>
<feature type="modified residue" description="Phosphoserine" evidence="4">
    <location>
        <position position="666"/>
    </location>
</feature>
<feature type="modified residue" description="Phosphothreonine" evidence="4">
    <location>
        <position position="668"/>
    </location>
</feature>
<feature type="splice variant" id="VSP_042078" description="In isoform 2." evidence="18">
    <original>FPTDERSWVYSPLHYSAQAPPASDGESDT</original>
    <variation>FWRLWGPHAPTWPWRREGRAACLCPYPPHVVTPFPGTGLCASWSPDGTGGLGAMSCCVSVS</variation>
    <location>
        <begin position="640"/>
        <end position="668"/>
    </location>
</feature>
<feature type="splice variant" id="VSP_042080" description="In isoform 3." evidence="18">
    <original>PTDERSWVYSPLHYSAQAPPASDGESDT</original>
    <variation>FTDGRYWIYSPRHRRLRAVTLSASGTVSDRSRPPWGEGAVPLGQQGAAGPRPEAQCLTSVVFQKGFG</variation>
    <location>
        <begin position="641"/>
        <end position="668"/>
    </location>
</feature>
<feature type="splice variant" id="VSP_042079" description="In isoform 4." evidence="17">
    <location>
        <begin position="641"/>
        <end position="668"/>
    </location>
</feature>
<feature type="sequence variant" id="VAR_036996" description="In LCCS3; loss of activity; dbSNP:rs121908315." evidence="12">
    <original>D</original>
    <variation>N</variation>
    <location>
        <position position="253"/>
    </location>
</feature>
<feature type="mutagenesis site" description="Abolishes binding to TLN2. Affects localization to focal adhesions." evidence="9">
    <original>S</original>
    <variation>D</variation>
    <location>
        <position position="650"/>
    </location>
</feature>
<feature type="mutagenesis site" description="Does not affect binding to TLN2 and localization to focal adhesions." evidence="9">
    <original>S</original>
    <variation>N</variation>
    <location>
        <position position="650"/>
    </location>
</feature>
<feature type="sequence conflict" description="In Ref. 3; BAH14283." evidence="19" ref="3">
    <original>V</original>
    <variation>M</variation>
    <location>
        <position position="236"/>
    </location>
</feature>
<feature type="helix" evidence="24">
    <location>
        <begin position="644"/>
        <end position="646"/>
    </location>
</feature>
<reference key="1">
    <citation type="journal article" date="2009" name="Biochem. J.">
        <title>Two novel phosphatidylinositol-4-phosphate 5-kinase type Igamma splice variants expressed in human cells display distinctive cellular targeting.</title>
        <authorList>
            <person name="Schill N.J."/>
            <person name="Anderson R.A."/>
        </authorList>
    </citation>
    <scope>NUCLEOTIDE SEQUENCE [MRNA] (ISOFORMS 2 AND 3)</scope>
    <scope>SUBCELLULAR LOCATION</scope>
    <scope>TISSUE SPECIFICITY (ISOFORMS 1; 2 AND 3)</scope>
</reference>
<reference key="2">
    <citation type="journal article" date="1998" name="DNA Res.">
        <title>Prediction of the coding sequences of unidentified human genes. IX. The complete sequences of 100 new cDNA clones from brain which can code for large proteins in vitro.</title>
        <authorList>
            <person name="Nagase T."/>
            <person name="Ishikawa K."/>
            <person name="Miyajima N."/>
            <person name="Tanaka A."/>
            <person name="Kotani H."/>
            <person name="Nomura N."/>
            <person name="Ohara O."/>
        </authorList>
    </citation>
    <scope>NUCLEOTIDE SEQUENCE [LARGE SCALE MRNA] (ISOFORM 1)</scope>
    <source>
        <tissue>Brain</tissue>
    </source>
</reference>
<reference key="3">
    <citation type="journal article" date="2004" name="Nat. Genet.">
        <title>Complete sequencing and characterization of 21,243 full-length human cDNAs.</title>
        <authorList>
            <person name="Ota T."/>
            <person name="Suzuki Y."/>
            <person name="Nishikawa T."/>
            <person name="Otsuki T."/>
            <person name="Sugiyama T."/>
            <person name="Irie R."/>
            <person name="Wakamatsu A."/>
            <person name="Hayashi K."/>
            <person name="Sato H."/>
            <person name="Nagai K."/>
            <person name="Kimura K."/>
            <person name="Makita H."/>
            <person name="Sekine M."/>
            <person name="Obayashi M."/>
            <person name="Nishi T."/>
            <person name="Shibahara T."/>
            <person name="Tanaka T."/>
            <person name="Ishii S."/>
            <person name="Yamamoto J."/>
            <person name="Saito K."/>
            <person name="Kawai Y."/>
            <person name="Isono Y."/>
            <person name="Nakamura Y."/>
            <person name="Nagahari K."/>
            <person name="Murakami K."/>
            <person name="Yasuda T."/>
            <person name="Iwayanagi T."/>
            <person name="Wagatsuma M."/>
            <person name="Shiratori A."/>
            <person name="Sudo H."/>
            <person name="Hosoiri T."/>
            <person name="Kaku Y."/>
            <person name="Kodaira H."/>
            <person name="Kondo H."/>
            <person name="Sugawara M."/>
            <person name="Takahashi M."/>
            <person name="Kanda K."/>
            <person name="Yokoi T."/>
            <person name="Furuya T."/>
            <person name="Kikkawa E."/>
            <person name="Omura Y."/>
            <person name="Abe K."/>
            <person name="Kamihara K."/>
            <person name="Katsuta N."/>
            <person name="Sato K."/>
            <person name="Tanikawa M."/>
            <person name="Yamazaki M."/>
            <person name="Ninomiya K."/>
            <person name="Ishibashi T."/>
            <person name="Yamashita H."/>
            <person name="Murakawa K."/>
            <person name="Fujimori K."/>
            <person name="Tanai H."/>
            <person name="Kimata M."/>
            <person name="Watanabe M."/>
            <person name="Hiraoka S."/>
            <person name="Chiba Y."/>
            <person name="Ishida S."/>
            <person name="Ono Y."/>
            <person name="Takiguchi S."/>
            <person name="Watanabe S."/>
            <person name="Yosida M."/>
            <person name="Hotuta T."/>
            <person name="Kusano J."/>
            <person name="Kanehori K."/>
            <person name="Takahashi-Fujii A."/>
            <person name="Hara H."/>
            <person name="Tanase T.-O."/>
            <person name="Nomura Y."/>
            <person name="Togiya S."/>
            <person name="Komai F."/>
            <person name="Hara R."/>
            <person name="Takeuchi K."/>
            <person name="Arita M."/>
            <person name="Imose N."/>
            <person name="Musashino K."/>
            <person name="Yuuki H."/>
            <person name="Oshima A."/>
            <person name="Sasaki N."/>
            <person name="Aotsuka S."/>
            <person name="Yoshikawa Y."/>
            <person name="Matsunawa H."/>
            <person name="Ichihara T."/>
            <person name="Shiohata N."/>
            <person name="Sano S."/>
            <person name="Moriya S."/>
            <person name="Momiyama H."/>
            <person name="Satoh N."/>
            <person name="Takami S."/>
            <person name="Terashima Y."/>
            <person name="Suzuki O."/>
            <person name="Nakagawa S."/>
            <person name="Senoh A."/>
            <person name="Mizoguchi H."/>
            <person name="Goto Y."/>
            <person name="Shimizu F."/>
            <person name="Wakebe H."/>
            <person name="Hishigaki H."/>
            <person name="Watanabe T."/>
            <person name="Sugiyama A."/>
            <person name="Takemoto M."/>
            <person name="Kawakami B."/>
            <person name="Yamazaki M."/>
            <person name="Watanabe K."/>
            <person name="Kumagai A."/>
            <person name="Itakura S."/>
            <person name="Fukuzumi Y."/>
            <person name="Fujimori Y."/>
            <person name="Komiyama M."/>
            <person name="Tashiro H."/>
            <person name="Tanigami A."/>
            <person name="Fujiwara T."/>
            <person name="Ono T."/>
            <person name="Yamada K."/>
            <person name="Fujii Y."/>
            <person name="Ozaki K."/>
            <person name="Hirao M."/>
            <person name="Ohmori Y."/>
            <person name="Kawabata A."/>
            <person name="Hikiji T."/>
            <person name="Kobatake N."/>
            <person name="Inagaki H."/>
            <person name="Ikema Y."/>
            <person name="Okamoto S."/>
            <person name="Okitani R."/>
            <person name="Kawakami T."/>
            <person name="Noguchi S."/>
            <person name="Itoh T."/>
            <person name="Shigeta K."/>
            <person name="Senba T."/>
            <person name="Matsumura K."/>
            <person name="Nakajima Y."/>
            <person name="Mizuno T."/>
            <person name="Morinaga M."/>
            <person name="Sasaki M."/>
            <person name="Togashi T."/>
            <person name="Oyama M."/>
            <person name="Hata H."/>
            <person name="Watanabe M."/>
            <person name="Komatsu T."/>
            <person name="Mizushima-Sugano J."/>
            <person name="Satoh T."/>
            <person name="Shirai Y."/>
            <person name="Takahashi Y."/>
            <person name="Nakagawa K."/>
            <person name="Okumura K."/>
            <person name="Nagase T."/>
            <person name="Nomura N."/>
            <person name="Kikuchi H."/>
            <person name="Masuho Y."/>
            <person name="Yamashita R."/>
            <person name="Nakai K."/>
            <person name="Yada T."/>
            <person name="Nakamura Y."/>
            <person name="Ohara O."/>
            <person name="Isogai T."/>
            <person name="Sugano S."/>
        </authorList>
    </citation>
    <scope>NUCLEOTIDE SEQUENCE [LARGE SCALE MRNA] (ISOFORM 4)</scope>
</reference>
<reference key="4">
    <citation type="journal article" date="2004" name="Nature">
        <title>The DNA sequence and biology of human chromosome 19.</title>
        <authorList>
            <person name="Grimwood J."/>
            <person name="Gordon L.A."/>
            <person name="Olsen A.S."/>
            <person name="Terry A."/>
            <person name="Schmutz J."/>
            <person name="Lamerdin J.E."/>
            <person name="Hellsten U."/>
            <person name="Goodstein D."/>
            <person name="Couronne O."/>
            <person name="Tran-Gyamfi M."/>
            <person name="Aerts A."/>
            <person name="Altherr M."/>
            <person name="Ashworth L."/>
            <person name="Bajorek E."/>
            <person name="Black S."/>
            <person name="Branscomb E."/>
            <person name="Caenepeel S."/>
            <person name="Carrano A.V."/>
            <person name="Caoile C."/>
            <person name="Chan Y.M."/>
            <person name="Christensen M."/>
            <person name="Cleland C.A."/>
            <person name="Copeland A."/>
            <person name="Dalin E."/>
            <person name="Dehal P."/>
            <person name="Denys M."/>
            <person name="Detter J.C."/>
            <person name="Escobar J."/>
            <person name="Flowers D."/>
            <person name="Fotopulos D."/>
            <person name="Garcia C."/>
            <person name="Georgescu A.M."/>
            <person name="Glavina T."/>
            <person name="Gomez M."/>
            <person name="Gonzales E."/>
            <person name="Groza M."/>
            <person name="Hammon N."/>
            <person name="Hawkins T."/>
            <person name="Haydu L."/>
            <person name="Ho I."/>
            <person name="Huang W."/>
            <person name="Israni S."/>
            <person name="Jett J."/>
            <person name="Kadner K."/>
            <person name="Kimball H."/>
            <person name="Kobayashi A."/>
            <person name="Larionov V."/>
            <person name="Leem S.-H."/>
            <person name="Lopez F."/>
            <person name="Lou Y."/>
            <person name="Lowry S."/>
            <person name="Malfatti S."/>
            <person name="Martinez D."/>
            <person name="McCready P.M."/>
            <person name="Medina C."/>
            <person name="Morgan J."/>
            <person name="Nelson K."/>
            <person name="Nolan M."/>
            <person name="Ovcharenko I."/>
            <person name="Pitluck S."/>
            <person name="Pollard M."/>
            <person name="Popkie A.P."/>
            <person name="Predki P."/>
            <person name="Quan G."/>
            <person name="Ramirez L."/>
            <person name="Rash S."/>
            <person name="Retterer J."/>
            <person name="Rodriguez A."/>
            <person name="Rogers S."/>
            <person name="Salamov A."/>
            <person name="Salazar A."/>
            <person name="She X."/>
            <person name="Smith D."/>
            <person name="Slezak T."/>
            <person name="Solovyev V."/>
            <person name="Thayer N."/>
            <person name="Tice H."/>
            <person name="Tsai M."/>
            <person name="Ustaszewska A."/>
            <person name="Vo N."/>
            <person name="Wagner M."/>
            <person name="Wheeler J."/>
            <person name="Wu K."/>
            <person name="Xie G."/>
            <person name="Yang J."/>
            <person name="Dubchak I."/>
            <person name="Furey T.S."/>
            <person name="DeJong P."/>
            <person name="Dickson M."/>
            <person name="Gordon D."/>
            <person name="Eichler E.E."/>
            <person name="Pennacchio L.A."/>
            <person name="Richardson P."/>
            <person name="Stubbs L."/>
            <person name="Rokhsar D.S."/>
            <person name="Myers R.M."/>
            <person name="Rubin E.M."/>
            <person name="Lucas S.M."/>
        </authorList>
    </citation>
    <scope>NUCLEOTIDE SEQUENCE [LARGE SCALE GENOMIC DNA]</scope>
</reference>
<reference key="5">
    <citation type="journal article" date="2002" name="Nature">
        <title>Recruitment and regulation of phosphatidylinositol phosphate kinase type 1 gamma by the FERM domain of talin.</title>
        <authorList>
            <person name="Di Paolo G."/>
            <person name="Pellegrini L."/>
            <person name="Letinic K."/>
            <person name="Cestra G."/>
            <person name="Zoncu R."/>
            <person name="Voronov S."/>
            <person name="Chang S."/>
            <person name="Guo J."/>
            <person name="Wenk M.R."/>
            <person name="De Camilli P."/>
        </authorList>
    </citation>
    <scope>FUNCTION</scope>
    <scope>INTERACTION WITH TLN2</scope>
    <scope>SUBCELLULAR LOCATION</scope>
    <scope>CATALYTIC ACTIVITY</scope>
</reference>
<reference key="6">
    <citation type="journal article" date="2003" name="J. Cell Biol.">
        <title>ARF6 stimulates clathrin/AP-2 recruitment to synaptic membranes by activating phosphatidylinositol phosphate kinase type Igamma.</title>
        <authorList>
            <person name="Krauss M."/>
            <person name="Kinuta M."/>
            <person name="Wenk M.R."/>
            <person name="De Camilli P."/>
            <person name="Takei K."/>
            <person name="Haucke V."/>
        </authorList>
    </citation>
    <scope>FUNCTION</scope>
    <scope>INTERACTION WITH ARF6</scope>
    <scope>SUBCELLULAR LOCATION</scope>
</reference>
<reference key="7">
    <citation type="journal article" date="2005" name="J. Cell Biol.">
        <title>Regulation of the interaction between PIPKI gamma and talin by proline-directed protein kinases.</title>
        <authorList>
            <person name="Lee S.Y."/>
            <person name="Voronov S."/>
            <person name="Letinic K."/>
            <person name="Nairn A.C."/>
            <person name="Di Paolo G."/>
            <person name="De Camilli P."/>
        </authorList>
    </citation>
    <scope>PHOSPHORYLATION AT TYR-649 AND SER-650</scope>
    <scope>MUTAGENESIS OF SER-650</scope>
</reference>
<reference key="8">
    <citation type="journal article" date="2007" name="J. Cell Biol.">
        <title>Type I gamma phosphatidylinositol phosphate kinase modulates adherens junction and E-cadherin trafficking via a direct interaction with mu 1B adaptin.</title>
        <authorList>
            <person name="Ling K."/>
            <person name="Bairstow S.F."/>
            <person name="Carbonara C."/>
            <person name="Turbin D.A."/>
            <person name="Huntsman D.G."/>
            <person name="Anderson R.A."/>
        </authorList>
    </citation>
    <scope>FUNCTION</scope>
    <scope>SUBCELLULAR LOCATION</scope>
    <scope>INTERACTION WITH CDH1</scope>
</reference>
<reference key="9">
    <citation type="journal article" date="2007" name="J. Cell Biol.">
        <title>Type I gamma phosphatidylinositol phosphate kinase is required for EGF-stimulated directional cell migration.</title>
        <authorList>
            <person name="Sun Y."/>
            <person name="Ling K."/>
            <person name="Wagoner M.P."/>
            <person name="Anderson R.A."/>
        </authorList>
    </citation>
    <scope>FUNCTION IN CELL MIGRATION AND ADHESION</scope>
</reference>
<reference key="10">
    <citation type="journal article" date="2010" name="PLoS ONE">
        <title>SIRT1 regulates thyroid-stimulating hormone release by enhancing PIP5Kgamma activity through deacetylation of specific lysine residues in mammals.</title>
        <authorList>
            <person name="Akieda-Asai S."/>
            <person name="Zaima N."/>
            <person name="Ikegami K."/>
            <person name="Kahyo T."/>
            <person name="Yao I."/>
            <person name="Hatanaka T."/>
            <person name="Iemura S."/>
            <person name="Sugiyama R."/>
            <person name="Yokozeki T."/>
            <person name="Eishi Y."/>
            <person name="Koike M."/>
            <person name="Ikeda K."/>
            <person name="Chiba T."/>
            <person name="Yamaza H."/>
            <person name="Shimokawa I."/>
            <person name="Song S.Y."/>
            <person name="Matsuno A."/>
            <person name="Mizutani A."/>
            <person name="Sawabe M."/>
            <person name="Chao M.V."/>
            <person name="Tanaka M."/>
            <person name="Kanaho Y."/>
            <person name="Natsume T."/>
            <person name="Sugimura H."/>
            <person name="Date Y."/>
            <person name="McBurney M.W."/>
            <person name="Guarente L."/>
            <person name="Setou M."/>
        </authorList>
    </citation>
    <scope>ACETYLATION AT LYS-265 AND LYS-268</scope>
    <scope>DEACETYLATION BY SIRT1</scope>
</reference>
<reference key="11">
    <citation type="journal article" date="2009" name="J. Cell Sci.">
        <title>PIP5K-driven PtdIns(4,5)P2 synthesis: regulation and cellular functions.</title>
        <authorList>
            <person name="van den Bout I."/>
            <person name="Divecha N."/>
        </authorList>
    </citation>
    <scope>REVIEW ON FUNCTION</scope>
</reference>
<reference key="12">
    <citation type="journal article" date="2012" name="J. Biol. Chem.">
        <title>Phosphatidylinositol-4-phosphate 5-kinase isoforms exhibit acyl chain selectivity for both substrate and lipid activator.</title>
        <authorList>
            <person name="Shulga Y.V."/>
            <person name="Anderson R.A."/>
            <person name="Topham M.K."/>
            <person name="Epand R.M."/>
        </authorList>
    </citation>
    <scope>FUNCTION</scope>
    <scope>CATALYTIC ACTIVITY</scope>
    <scope>BIOPHYSICOCHEMICAL PROPERTIES</scope>
</reference>
<reference key="13">
    <citation type="journal article" date="2015" name="EMBO J.">
        <title>LAPTM4B is a PtdIns(4,5)P2 effector that regulates EGFR signaling, lysosomal sorting, and degradation.</title>
        <authorList>
            <person name="Tan X."/>
            <person name="Sun Y."/>
            <person name="Thapa N."/>
            <person name="Liao Y."/>
            <person name="Hedman A.C."/>
            <person name="Anderson R.A."/>
        </authorList>
    </citation>
    <scope>INTERACTION WITH LAPTM4B</scope>
</reference>
<reference key="14">
    <citation type="journal article" date="2007" name="Am. J. Hum. Genet.">
        <title>Lethal contractural syndrome type 3 (LCCS3) is caused by a mutation in PIP5K1C, which encodes PIPKI gamma of the phophatidylinositol pathway.</title>
        <authorList>
            <person name="Narkis G."/>
            <person name="Ofir R."/>
            <person name="Landau D."/>
            <person name="Manor E."/>
            <person name="Volokita M."/>
            <person name="Hershkowitz R."/>
            <person name="Elbedour K."/>
            <person name="Birk O.S."/>
        </authorList>
    </citation>
    <scope>VARIANT LCCS3 ASN-253</scope>
    <scope>CHARACTERIZATION OF VARIANT LCCS3 ASN-253</scope>
</reference>
<accession>O60331</accession>
<accession>B7Z9E7</accession>
<accession>C6GIJ7</accession>
<accession>C6GIJ8</accession>
<accession>Q7LE07</accession>
<gene>
    <name evidence="23" type="primary">PIP5K1C</name>
    <name type="synonym">KIAA0589</name>
</gene>
<sequence length="668" mass="73260">MELEVPDEAESAEAGAVPSEAAWAAESGAAAGLAQKKAAPTEVLSMTAQPGPGHGKKLGHRGVDASGETTYKKTTSSTLKGAIQLGIGYTVGHLSSKPERDVLMQDFYVVESIFFPSEGSNLTPAHHFQDFRFKTYAPVAFRYFRELFGIRPDDYLYSLCNEPLIELSNPGASGSLFYVTSDDEFIIKTVMHKEAEFLQKLLPGYYMNLNQNPRTLLPKFYGLYCVQSGGKNIRVVVMNNILPRVVKMHLKFDLKGSTYKRRASKKEKEKSFPTYKDLDFMQDMPEGLLLDADTFSALVKTLQRDCLVLESFKIMDYSLLLGVHNIDQHERERQAQGAQSTSDEKRPVGQKALYSTAMESIQGGAARGEAIESDDTMGGIPAVNGRGERLLLHIGIIDILQSYRFIKKLEHTWKALVHDGDTVSVHRPSFYAERFFKFMSNTVFRKNSSLKSSPSKKGRGGALLAVKPLGPTAAFSASQIPSEREEAQYDLRGARSYPTLEDEGRPDLLPCTPPSFEEATTASIATTLSSTSLSIPERSPSETSEQPRYRRRTQSSGQDGRPQEEPPAEEDLQQITVQVEPACSVEIVVPKEEDAGVEASPAGASAAVEVETASQASDEEGAPASQASDEEDAPATDIYFPTDERSWVYSPLHYSAQAPPASDGESDT</sequence>
<proteinExistence type="evidence at protein level"/>
<comment type="function">
    <text evidence="2 3 7 8 10 11 15 21">Catalyzes the phosphorylation of phosphatidylinositol 4-phosphate (PtdIns(4)P/PI4P) to form phosphatidylinositol 4,5-bisphosphate (PtdIns(4,5)P2/PIP2), a lipid second messenger that regulates several cellular processes such as signal transduction, vesicle trafficking, actin cytoskeleton dynamics, cell adhesion, and cell motility (PubMed:12422219, PubMed:22942276). PtdIns(4,5)P2 can directly act as a second messenger or can be utilized as a precursor to generate other second messengers: inositol 1,4,5-trisphosphate (IP3), diacylglycerol (DAG) or phosphatidylinositol-3,4,5-trisphosphate (PtdIns(3,4,5)P3/PIP3) (Probable). PIP5K1A-mediated phosphorylation of PtdIns(4)P is the predominant pathway for PtdIns(4,5)P2 synthesis (By similarity). Together with PIP5K1A, is required for phagocytosis, both enzymes regulating different types of actin remodeling at sequential steps (By similarity). Promotes particle attachment by generating the pool of PtdIns(4,5)P2 that induces controlled actin depolymerization to facilitate Fc-gamma-R clustering. Mediates RAC1-dependent reorganization of actin filaments. Required for synaptic vesicle transport (By similarity). Controls the plasma membrane pool of PtdIns(4,5)P2 implicated in synaptic vesicle endocytosis and exocytosis (PubMed:12847086). Plays a role in endocytosis mediated by clathrin and AP-2 (adaptor protein complex 2) (PubMed:12847086). Required for clathrin-coated pits assembly at the synapse (PubMed:17261850). Participates in cell junction assembly (PubMed:17261850). Modulates adherens junctions formation by facilitating CDH1/cadherin trafficking (PubMed:17261850). Required for focal adhesion dynamics. Modulates the targeting of talins (TLN1 and TLN2) to the plasma membrane and their efficient assembly into focal adhesions (PubMed:12422219). Regulates the interaction between talins (TLN1 and TLN2) and beta-integrins (PubMed:12422219). Required for uropodium formation and retraction of the cell rear during directed migration (By similarity). Has a role in growth factor-stimulated directional cell migration and adhesion (By similarity). Required for talin assembly into nascent adhesions forming at the leading edge toward the direction of the growth factor (PubMed:17635937). Negative regulator of T-cell activation and adhesion (By similarity). Negatively regulates integrin alpha-L/beta-2 (LFA-1) polarization and adhesion induced by T-cell receptor (By similarity). Together with PIP5K1A has a role during embryogenesis and together with PIP5K1B may have a role immediately after birth (By similarity).</text>
</comment>
<comment type="catalytic activity">
    <reaction evidence="7 15">
        <text>a 1,2-diacyl-sn-glycero-3-phospho-(1D-myo-inositol 4-phosphate) + ATP = a 1,2-diacyl-sn-glycero-3-phospho-(1D-myo-inositol-4,5-bisphosphate) + ADP + H(+)</text>
        <dbReference type="Rhea" id="RHEA:14425"/>
        <dbReference type="ChEBI" id="CHEBI:15378"/>
        <dbReference type="ChEBI" id="CHEBI:30616"/>
        <dbReference type="ChEBI" id="CHEBI:58178"/>
        <dbReference type="ChEBI" id="CHEBI:58456"/>
        <dbReference type="ChEBI" id="CHEBI:456216"/>
        <dbReference type="EC" id="2.7.1.68"/>
    </reaction>
    <physiologicalReaction direction="left-to-right" evidence="20 22">
        <dbReference type="Rhea" id="RHEA:14426"/>
    </physiologicalReaction>
</comment>
<comment type="catalytic activity">
    <reaction evidence="15">
        <text>1-octadecanoyl-2-(5Z,8Z,11Z,14Z)-eicosatetraenoyl-sn-glycero-3-phospho-1D-myo-inositol 4-phosphate + ATP = 1-octadecanoyl-2-(5Z,8Z,11Z,14Z)-eicosatetraenoyl-sn-glycero-3-phospho-1D-myo-inositol 4,5-bisphosphate + ADP + H(+)</text>
        <dbReference type="Rhea" id="RHEA:40363"/>
        <dbReference type="ChEBI" id="CHEBI:15378"/>
        <dbReference type="ChEBI" id="CHEBI:30616"/>
        <dbReference type="ChEBI" id="CHEBI:77136"/>
        <dbReference type="ChEBI" id="CHEBI:77137"/>
        <dbReference type="ChEBI" id="CHEBI:456216"/>
    </reaction>
    <physiologicalReaction direction="left-to-right" evidence="22">
        <dbReference type="Rhea" id="RHEA:40364"/>
    </physiologicalReaction>
</comment>
<comment type="catalytic activity">
    <reaction evidence="15">
        <text>1-octadecanoyl-2-(9Z)-octadecenoyl-sn-glycero-3-phospho-1D-myo-inositol 4-phosphate + ATP = 1-octadecanoyl-2-(9Z)-octadecenoyl-sn-glycero-3-phospho-1D-myo-inositol 4,5-bisphosphate + ADP + H(+)</text>
        <dbReference type="Rhea" id="RHEA:40367"/>
        <dbReference type="ChEBI" id="CHEBI:15378"/>
        <dbReference type="ChEBI" id="CHEBI:30616"/>
        <dbReference type="ChEBI" id="CHEBI:77139"/>
        <dbReference type="ChEBI" id="CHEBI:77140"/>
        <dbReference type="ChEBI" id="CHEBI:456216"/>
    </reaction>
    <physiologicalReaction direction="left-to-right" evidence="22">
        <dbReference type="Rhea" id="RHEA:40368"/>
    </physiologicalReaction>
</comment>
<comment type="catalytic activity">
    <reaction evidence="15">
        <text>1-octadecanoyl-2-(9Z)-octadecenoyl-sn-glycero-3-phospho-1D-myo-inositol + ATP = 1-octadecanoyl-2-(9Z)-octadecenoyl-sn-glycero-3-phospho-1D-myo-inositol 5-phosphate + ADP + H(+)</text>
        <dbReference type="Rhea" id="RHEA:40379"/>
        <dbReference type="ChEBI" id="CHEBI:15378"/>
        <dbReference type="ChEBI" id="CHEBI:30616"/>
        <dbReference type="ChEBI" id="CHEBI:77163"/>
        <dbReference type="ChEBI" id="CHEBI:77164"/>
        <dbReference type="ChEBI" id="CHEBI:456216"/>
    </reaction>
    <physiologicalReaction direction="left-to-right" evidence="22">
        <dbReference type="Rhea" id="RHEA:40380"/>
    </physiologicalReaction>
</comment>
<comment type="catalytic activity">
    <reaction evidence="15">
        <text>1-octadecanoyl-2-(9Z,12Z)-octadecadienoyl-sn-glycero-3-phospho-1D-myo-inositol + ATP = 1-octadecanoyl-2-(9Z,12Z)-octadecadienoyl-sn-glycero-3-phospho-1D-myo-inositol 5-phosphate + ADP + H(+)</text>
        <dbReference type="Rhea" id="RHEA:40383"/>
        <dbReference type="ChEBI" id="CHEBI:15378"/>
        <dbReference type="ChEBI" id="CHEBI:30616"/>
        <dbReference type="ChEBI" id="CHEBI:77158"/>
        <dbReference type="ChEBI" id="CHEBI:77159"/>
        <dbReference type="ChEBI" id="CHEBI:456216"/>
    </reaction>
    <physiologicalReaction direction="left-to-right" evidence="22">
        <dbReference type="Rhea" id="RHEA:40384"/>
    </physiologicalReaction>
</comment>
<comment type="catalytic activity">
    <reaction evidence="15">
        <text>1-octadecanoyl-2-(5Z,8Z,11Z,14Z-eicosatetraenoyl)-sn-glycero-3-phospho-(1D-myo-inositol) + ATP = 1-octadecanoyl-2-(5Z,8Z,11Z,14Z)-eicosatetraenoyl-sn-glycero-3-phospho-1D-myo-inositol 5-phosphate + ADP + H(+)</text>
        <dbReference type="Rhea" id="RHEA:40375"/>
        <dbReference type="ChEBI" id="CHEBI:15378"/>
        <dbReference type="ChEBI" id="CHEBI:30616"/>
        <dbReference type="ChEBI" id="CHEBI:77160"/>
        <dbReference type="ChEBI" id="CHEBI:133606"/>
        <dbReference type="ChEBI" id="CHEBI:456216"/>
    </reaction>
    <physiologicalReaction direction="left-to-right" evidence="22">
        <dbReference type="Rhea" id="RHEA:40376"/>
    </physiologicalReaction>
</comment>
<comment type="catalytic activity">
    <reaction evidence="15">
        <text>1,2-di-(9Z,12Z)-octadecadienoyl-sn-glycero-3-phospho-1D-myo-inositol + ATP = 1,2-di(9Z,12Z)-octadecadienoyl-sn-glycero-3-phospho-1D-myo-inositol 5-phosphate + ADP + H(+)</text>
        <dbReference type="Rhea" id="RHEA:40387"/>
        <dbReference type="ChEBI" id="CHEBI:15378"/>
        <dbReference type="ChEBI" id="CHEBI:30616"/>
        <dbReference type="ChEBI" id="CHEBI:77165"/>
        <dbReference type="ChEBI" id="CHEBI:77167"/>
        <dbReference type="ChEBI" id="CHEBI:456216"/>
    </reaction>
    <physiologicalReaction direction="left-to-right" evidence="22">
        <dbReference type="Rhea" id="RHEA:40388"/>
    </physiologicalReaction>
</comment>
<comment type="biophysicochemical properties">
    <kinetics>
        <KM evidence="15">1.6 uM for 1-octadecanoyl-2-(5Z,8Z,11Z,14Z)-eicosatetraenoyl-sn-glycero-3-phospho-1D-myo-inositol 4-phosphate</KM>
        <KM evidence="15">15 uM for 1-octadecanoyl-2-(9Z)-octadecenoyl-sn-glycero-3-phospho-1D-myo-inositol 4-phosphate</KM>
    </kinetics>
</comment>
<comment type="subunit">
    <text evidence="2 4 7 16">Interacts with TLN1 (By similarity). Interacts with TLN2; interaction stimulates 1-phosphatidylinositol-4-phosphate 5-kinase activity (PubMed:12422219). May compete with beta-integrins for the same binding site on TLN1 and TLN2. Interacts with ARF6; interaction stimulates 1-phosphatidylinositol-4-phosphate 5-kinase activity. Interacts with AP2B1. Interacts with AP2M1; phosphorylation of PIP5K1C by CSK disrupts the interaction; clathrin competes with PIP5K1C (By similarity). Interacts with CDH1. Interacts with CSK (By similarity). Interacts with PLCG1; interaction is abolished upon EGF stimulation (By similarity). Interacts with LAPTM4B; promotes SNX5 association with LAPTM4B; kinase activity of PIP5K1C is required; interaction is regulated by phosphatidylinositol 4,5-bisphosphate generated by PIP5K1C (PubMed:25588945).</text>
</comment>
<comment type="interaction">
    <interactant intactId="EBI-8869029">
        <id>O60331</id>
    </interactant>
    <interactant intactId="EBI-2462036">
        <id>Q9Y490</id>
        <label>TLN1</label>
    </interactant>
    <organismsDiffer>false</organismsDiffer>
    <experiments>8</experiments>
</comment>
<comment type="interaction">
    <interactant intactId="EBI-8838062">
        <id>O60331-4</id>
    </interactant>
    <interactant intactId="EBI-297509">
        <id>P46940</id>
        <label>IQGAP1</label>
    </interactant>
    <organismsDiffer>false</organismsDiffer>
    <experiments>7</experiments>
</comment>
<comment type="subcellular location">
    <subcellularLocation>
        <location>Cell membrane</location>
        <topology>Peripheral membrane protein</topology>
        <orientation evidence="4">Cytoplasmic side</orientation>
    </subcellularLocation>
    <subcellularLocation>
        <location evidence="4">Endomembrane system</location>
    </subcellularLocation>
    <subcellularLocation>
        <location evidence="2">Cytoplasm</location>
    </subcellularLocation>
    <subcellularLocation>
        <location evidence="7">Cell junction</location>
        <location evidence="7">Focal adhesion</location>
    </subcellularLocation>
    <subcellularLocation>
        <location evidence="10">Cell junction</location>
        <location evidence="10">Adherens junction</location>
    </subcellularLocation>
    <subcellularLocation>
        <location evidence="4">Cell projection</location>
        <location evidence="4">Ruffle membrane</location>
    </subcellularLocation>
    <subcellularLocation>
        <location evidence="2">Cell projection</location>
        <location evidence="2">Phagocytic cup</location>
    </subcellularLocation>
    <subcellularLocation>
        <location evidence="2">Cell projection</location>
        <location evidence="2">Uropodium</location>
    </subcellularLocation>
    <text>Detected in plasma membrane invaginations. Isoform 3 is detected in intracellular vesicle-like structures.</text>
</comment>
<comment type="subcellular location">
    <molecule>Isoform 2</molecule>
    <subcellularLocation>
        <location>Cytoplasm</location>
    </subcellularLocation>
    <subcellularLocation>
        <location>Nucleus</location>
    </subcellularLocation>
</comment>
<comment type="alternative products">
    <event type="alternative splicing"/>
    <isoform>
        <id>O60331-1</id>
        <name>1</name>
        <name>PIPKIgamma-90</name>
        <name>PIPKIgamma-668</name>
        <name>PIPkinIgamma-a</name>
        <name>PIPKIgamma_i2</name>
        <sequence type="displayed"/>
    </isoform>
    <isoform>
        <id>O60331-2</id>
        <name>2</name>
        <name>variant 700</name>
        <name>PIPKIgamma-700</name>
        <name>PIPKIgamma_i4</name>
        <sequence type="described" ref="VSP_042078"/>
    </isoform>
    <isoform>
        <id>O60331-3</id>
        <name>3</name>
        <name>variant 707</name>
        <name>PIPKIgamma-707</name>
        <name>PIPKIgamma_i5</name>
        <sequence type="described" ref="VSP_042080"/>
    </isoform>
    <isoform>
        <id>O60331-4</id>
        <name>4</name>
        <name>PIPKIgamma-87</name>
        <name>PIPKIgamma-640</name>
        <name>PIPkinIgamma-b</name>
        <name>PIPKIgamma_i1</name>
        <sequence type="described" ref="VSP_042079"/>
    </isoform>
</comment>
<comment type="tissue specificity">
    <molecule>Isoform 1</molecule>
    <text evidence="13">Isoform 1 is strongly expressed in brain and also detected in heart and lung.</text>
</comment>
<comment type="tissue specificity">
    <molecule>Isoform 2</molecule>
    <text evidence="13">Isoform 2 is strongly expressed in pancreas and liver and in lesser quantities in brain, heart, lung and kidney.</text>
</comment>
<comment type="tissue specificity">
    <molecule>Isoform 3</molecule>
    <text evidence="13">Isoform 3 is detected in large amounts in heart and large intestine, is also present in lung, pancreas and thyroid, and to a lesser extent in brain, stomach and kidney.</text>
</comment>
<comment type="PTM">
    <text evidence="1 9">Phosphorylation on Ser-650 negatively regulates binding to TLN2 and is strongly stimulated in mitosis. Phosphorylation on Tyr-649 is necessary for targeting to focal adhesions. Phosphorylation on Ser-650 and Tyr-649 are mutually exclusive. Phosphorylated by SYK and CSK (By similarity). Tyrosine phosphorylation is enhanced by PTK2 signaling. Phosphorylated at Tyr-639 upon EGF stimulation. Some studies suggest that phosphorylation on Tyr-649 enhances binding to tailins (TLN1 and TLN2). According to PubMed:15738269 phosphorylation at Tyr-649 does not directly enhance binding to tailins (TLN1 and TLN2) but may act indirectly by inhibiting phosphorylation at Ser-650.</text>
</comment>
<comment type="PTM">
    <text evidence="14">Acetylation at Lys-265 and Lys-268 seems to decrease lipid 1-phosphatidylinositol-4-phosphate 5-kinase activity. Deacetylation of these sites by SIRT1 positively regulates the exocytosis of TSH-containing granules from pituitary cells.</text>
</comment>
<comment type="disease" evidence="12">
    <disease id="DI-01893">
        <name>Lethal congenital contracture syndrome 3</name>
        <acronym>LCCS3</acronym>
        <description>A form of lethal congenital contracture syndrome, an autosomal recessive disorder characterized by degeneration of anterior horn neurons, extreme skeletal muscle atrophy, and congenital non-progressive joint contractures (arthrogryposis). The contractures can involve the upper or lower limbs and/or the vertebral column, leading to various degrees of flexion or extension limitations evident at birth. LCCS3 patients present at birth with severe multiple joint contractures and severe muscle wasting and atrophy, mainly in the legs. Death occurs minutes to hours after birth due to respiratory insufficiency. The phenotype can be distinguished from that of LCCS1 by the absence of hydrops, fractures and multiple pterygia, and from LCCS2 by the absence of neurogenic bladder defect.</description>
        <dbReference type="MIM" id="611369"/>
    </disease>
    <text>The disease is caused by variants affecting the gene represented in this entry.</text>
</comment>
<comment type="sequence caution" evidence="19">
    <conflict type="erroneous initiation">
        <sequence resource="EMBL-CDS" id="BAA25515"/>
    </conflict>
    <text>Extended N-terminus.</text>
</comment>
<name>PI51C_HUMAN</name>
<organism>
    <name type="scientific">Homo sapiens</name>
    <name type="common">Human</name>
    <dbReference type="NCBI Taxonomy" id="9606"/>
    <lineage>
        <taxon>Eukaryota</taxon>
        <taxon>Metazoa</taxon>
        <taxon>Chordata</taxon>
        <taxon>Craniata</taxon>
        <taxon>Vertebrata</taxon>
        <taxon>Euteleostomi</taxon>
        <taxon>Mammalia</taxon>
        <taxon>Eutheria</taxon>
        <taxon>Euarchontoglires</taxon>
        <taxon>Primates</taxon>
        <taxon>Haplorrhini</taxon>
        <taxon>Catarrhini</taxon>
        <taxon>Hominidae</taxon>
        <taxon>Homo</taxon>
    </lineage>
</organism>
<dbReference type="EC" id="2.7.1.68" evidence="7 15"/>
<dbReference type="EMBL" id="FJ965536">
    <property type="protein sequence ID" value="ACS73483.1"/>
    <property type="molecule type" value="mRNA"/>
</dbReference>
<dbReference type="EMBL" id="FJ965537">
    <property type="protein sequence ID" value="ACS73484.1"/>
    <property type="molecule type" value="mRNA"/>
</dbReference>
<dbReference type="EMBL" id="AB011161">
    <property type="protein sequence ID" value="BAA25515.1"/>
    <property type="status" value="ALT_INIT"/>
    <property type="molecule type" value="mRNA"/>
</dbReference>
<dbReference type="EMBL" id="AK315912">
    <property type="protein sequence ID" value="BAH14283.1"/>
    <property type="molecule type" value="mRNA"/>
</dbReference>
<dbReference type="EMBL" id="AC005542">
    <property type="protein sequence ID" value="AAC32904.1"/>
    <property type="molecule type" value="Genomic_DNA"/>
</dbReference>
<dbReference type="EMBL" id="AC093071">
    <property type="status" value="NOT_ANNOTATED_CDS"/>
    <property type="molecule type" value="Genomic_DNA"/>
</dbReference>
<dbReference type="EMBL" id="AC004637">
    <property type="status" value="NOT_ANNOTATED_CDS"/>
    <property type="molecule type" value="Genomic_DNA"/>
</dbReference>
<dbReference type="CCDS" id="CCDS32872.1">
    <molecule id="O60331-1"/>
</dbReference>
<dbReference type="CCDS" id="CCDS56074.1">
    <molecule id="O60331-4"/>
</dbReference>
<dbReference type="CCDS" id="CCDS74257.1">
    <molecule id="O60331-3"/>
</dbReference>
<dbReference type="RefSeq" id="NP_001182662.1">
    <molecule id="O60331-4"/>
    <property type="nucleotide sequence ID" value="NM_001195733.2"/>
</dbReference>
<dbReference type="RefSeq" id="NP_001287778.1">
    <molecule id="O60331-3"/>
    <property type="nucleotide sequence ID" value="NM_001300849.2"/>
</dbReference>
<dbReference type="RefSeq" id="NP_036530.1">
    <molecule id="O60331-1"/>
    <property type="nucleotide sequence ID" value="NM_012398.3"/>
</dbReference>
<dbReference type="RefSeq" id="XP_047294489.1">
    <molecule id="O60331-2"/>
    <property type="nucleotide sequence ID" value="XM_047438533.1"/>
</dbReference>
<dbReference type="RefSeq" id="XP_054176363.1">
    <molecule id="O60331-2"/>
    <property type="nucleotide sequence ID" value="XM_054320388.1"/>
</dbReference>
<dbReference type="PDB" id="2G35">
    <property type="method" value="NMR"/>
    <property type="chains" value="B=646-653"/>
</dbReference>
<dbReference type="PDB" id="3H1Z">
    <property type="method" value="X-ray"/>
    <property type="resolution" value="1.83 A"/>
    <property type="chains" value="P=639-653"/>
</dbReference>
<dbReference type="PDB" id="3H85">
    <property type="method" value="X-ray"/>
    <property type="resolution" value="2.60 A"/>
    <property type="chains" value="P=646-653"/>
</dbReference>
<dbReference type="PDBsum" id="2G35"/>
<dbReference type="PDBsum" id="3H1Z"/>
<dbReference type="PDBsum" id="3H85"/>
<dbReference type="SMR" id="O60331"/>
<dbReference type="BioGRID" id="116969">
    <property type="interactions" value="46"/>
</dbReference>
<dbReference type="DIP" id="DIP-39809N"/>
<dbReference type="FunCoup" id="O60331">
    <property type="interactions" value="1314"/>
</dbReference>
<dbReference type="IntAct" id="O60331">
    <property type="interactions" value="17"/>
</dbReference>
<dbReference type="MINT" id="O60331"/>
<dbReference type="STRING" id="9606.ENSP00000466363"/>
<dbReference type="BindingDB" id="O60331"/>
<dbReference type="ChEMBL" id="CHEMBL1908383"/>
<dbReference type="DrugCentral" id="O60331"/>
<dbReference type="SwissLipids" id="SLP:000000551">
    <molecule id="O60331-4"/>
</dbReference>
<dbReference type="GlyGen" id="O60331">
    <property type="glycosylation" value="2 sites, 1 O-linked glycan (1 site)"/>
</dbReference>
<dbReference type="iPTMnet" id="O60331"/>
<dbReference type="PhosphoSitePlus" id="O60331"/>
<dbReference type="SwissPalm" id="O60331"/>
<dbReference type="BioMuta" id="PIP5K1C"/>
<dbReference type="jPOST" id="O60331"/>
<dbReference type="MassIVE" id="O60331"/>
<dbReference type="PaxDb" id="9606-ENSP00000466363"/>
<dbReference type="PeptideAtlas" id="O60331"/>
<dbReference type="ProteomicsDB" id="49349">
    <molecule id="O60331-1"/>
</dbReference>
<dbReference type="ProteomicsDB" id="49350">
    <molecule id="O60331-2"/>
</dbReference>
<dbReference type="ProteomicsDB" id="49351">
    <molecule id="O60331-3"/>
</dbReference>
<dbReference type="ProteomicsDB" id="49352">
    <molecule id="O60331-4"/>
</dbReference>
<dbReference type="Pumba" id="O60331"/>
<dbReference type="Antibodypedia" id="2779">
    <property type="antibodies" value="237 antibodies from 31 providers"/>
</dbReference>
<dbReference type="DNASU" id="23396"/>
<dbReference type="Ensembl" id="ENST00000335312.8">
    <molecule id="O60331-1"/>
    <property type="protein sequence ID" value="ENSP00000335333.3"/>
    <property type="gene ID" value="ENSG00000186111.11"/>
</dbReference>
<dbReference type="Ensembl" id="ENST00000537021.1">
    <molecule id="O60331-2"/>
    <property type="protein sequence ID" value="ENSP00000444779.1"/>
    <property type="gene ID" value="ENSG00000186111.11"/>
</dbReference>
<dbReference type="Ensembl" id="ENST00000539785.5">
    <molecule id="O60331-4"/>
    <property type="protein sequence ID" value="ENSP00000445992.1"/>
    <property type="gene ID" value="ENSG00000186111.11"/>
</dbReference>
<dbReference type="Ensembl" id="ENST00000589578.5">
    <molecule id="O60331-3"/>
    <property type="protein sequence ID" value="ENSP00000466363.1"/>
    <property type="gene ID" value="ENSG00000186111.11"/>
</dbReference>
<dbReference type="GeneID" id="23396"/>
<dbReference type="KEGG" id="hsa:23396"/>
<dbReference type="MANE-Select" id="ENST00000335312.8">
    <property type="protein sequence ID" value="ENSP00000335333.3"/>
    <property type="RefSeq nucleotide sequence ID" value="NM_012398.3"/>
    <property type="RefSeq protein sequence ID" value="NP_036530.1"/>
</dbReference>
<dbReference type="UCSC" id="uc002lyj.3">
    <molecule id="O60331-1"/>
    <property type="organism name" value="human"/>
</dbReference>
<dbReference type="AGR" id="HGNC:8996"/>
<dbReference type="CTD" id="23396"/>
<dbReference type="DisGeNET" id="23396"/>
<dbReference type="GeneCards" id="PIP5K1C"/>
<dbReference type="HGNC" id="HGNC:8996">
    <property type="gene designation" value="PIP5K1C"/>
</dbReference>
<dbReference type="HPA" id="ENSG00000186111">
    <property type="expression patterns" value="Tissue enhanced (brain)"/>
</dbReference>
<dbReference type="MalaCards" id="PIP5K1C"/>
<dbReference type="MIM" id="606102">
    <property type="type" value="gene"/>
</dbReference>
<dbReference type="MIM" id="611369">
    <property type="type" value="phenotype"/>
</dbReference>
<dbReference type="neXtProt" id="NX_O60331"/>
<dbReference type="OpenTargets" id="ENSG00000186111"/>
<dbReference type="Orphanet" id="137783">
    <property type="disease" value="Lethal congenital contracture syndrome type 3"/>
</dbReference>
<dbReference type="PharmGKB" id="PA33329"/>
<dbReference type="VEuPathDB" id="HostDB:ENSG00000186111"/>
<dbReference type="eggNOG" id="KOG0229">
    <property type="taxonomic scope" value="Eukaryota"/>
</dbReference>
<dbReference type="GeneTree" id="ENSGT00940000159258"/>
<dbReference type="HOGENOM" id="CLU_004312_5_1_1"/>
<dbReference type="InParanoid" id="O60331"/>
<dbReference type="OMA" id="DIYFFPD"/>
<dbReference type="OrthoDB" id="70770at2759"/>
<dbReference type="PAN-GO" id="O60331">
    <property type="GO annotations" value="3 GO annotations based on evolutionary models"/>
</dbReference>
<dbReference type="PhylomeDB" id="O60331"/>
<dbReference type="TreeFam" id="TF319618"/>
<dbReference type="BioCyc" id="MetaCyc:HS02710-MONOMER"/>
<dbReference type="BRENDA" id="2.7.1.68">
    <property type="organism ID" value="2681"/>
</dbReference>
<dbReference type="PathwayCommons" id="O60331"/>
<dbReference type="Reactome" id="R-HSA-1660499">
    <property type="pathway name" value="Synthesis of PIPs at the plasma membrane"/>
</dbReference>
<dbReference type="Reactome" id="R-HSA-399955">
    <property type="pathway name" value="SEMA3A-Plexin repulsion signaling by inhibiting Integrin adhesion"/>
</dbReference>
<dbReference type="Reactome" id="R-HSA-6811558">
    <property type="pathway name" value="PI5P, PP2A and IER3 Regulate PI3K/AKT Signaling"/>
</dbReference>
<dbReference type="Reactome" id="R-HSA-8856828">
    <property type="pathway name" value="Clathrin-mediated endocytosis"/>
</dbReference>
<dbReference type="SignaLink" id="O60331"/>
<dbReference type="SIGNOR" id="O60331"/>
<dbReference type="BioGRID-ORCS" id="23396">
    <property type="hits" value="19 hits in 1161 CRISPR screens"/>
</dbReference>
<dbReference type="CD-CODE" id="FB4E32DD">
    <property type="entry name" value="Presynaptic clusters and postsynaptic densities"/>
</dbReference>
<dbReference type="ChiTaRS" id="PIP5K1C">
    <property type="organism name" value="human"/>
</dbReference>
<dbReference type="EvolutionaryTrace" id="O60331"/>
<dbReference type="GeneWiki" id="PIP5K1C"/>
<dbReference type="GenomeRNAi" id="23396"/>
<dbReference type="Pharos" id="O60331">
    <property type="development level" value="Tchem"/>
</dbReference>
<dbReference type="PRO" id="PR:O60331"/>
<dbReference type="Proteomes" id="UP000005640">
    <property type="component" value="Chromosome 19"/>
</dbReference>
<dbReference type="RNAct" id="O60331">
    <property type="molecule type" value="protein"/>
</dbReference>
<dbReference type="Bgee" id="ENSG00000186111">
    <property type="expression patterns" value="Expressed in right hemisphere of cerebellum and 196 other cell types or tissues"/>
</dbReference>
<dbReference type="GO" id="GO:0005912">
    <property type="term" value="C:adherens junction"/>
    <property type="evidence" value="ECO:0007669"/>
    <property type="project" value="UniProtKB-SubCell"/>
</dbReference>
<dbReference type="GO" id="GO:0005829">
    <property type="term" value="C:cytosol"/>
    <property type="evidence" value="ECO:0000314"/>
    <property type="project" value="HPA"/>
</dbReference>
<dbReference type="GO" id="GO:0010008">
    <property type="term" value="C:endosome membrane"/>
    <property type="evidence" value="ECO:0000314"/>
    <property type="project" value="UniProtKB"/>
</dbReference>
<dbReference type="GO" id="GO:0005925">
    <property type="term" value="C:focal adhesion"/>
    <property type="evidence" value="ECO:0000304"/>
    <property type="project" value="UniProtKB"/>
</dbReference>
<dbReference type="GO" id="GO:0005654">
    <property type="term" value="C:nucleoplasm"/>
    <property type="evidence" value="ECO:0000314"/>
    <property type="project" value="HPA"/>
</dbReference>
<dbReference type="GO" id="GO:0001891">
    <property type="term" value="C:phagocytic cup"/>
    <property type="evidence" value="ECO:0007669"/>
    <property type="project" value="UniProtKB-SubCell"/>
</dbReference>
<dbReference type="GO" id="GO:0005886">
    <property type="term" value="C:plasma membrane"/>
    <property type="evidence" value="ECO:0000318"/>
    <property type="project" value="GO_Central"/>
</dbReference>
<dbReference type="GO" id="GO:0098793">
    <property type="term" value="C:presynapse"/>
    <property type="evidence" value="ECO:0007669"/>
    <property type="project" value="GOC"/>
</dbReference>
<dbReference type="GO" id="GO:0032587">
    <property type="term" value="C:ruffle membrane"/>
    <property type="evidence" value="ECO:0007669"/>
    <property type="project" value="UniProtKB-SubCell"/>
</dbReference>
<dbReference type="GO" id="GO:0001931">
    <property type="term" value="C:uropod"/>
    <property type="evidence" value="ECO:0000304"/>
    <property type="project" value="UniProtKB"/>
</dbReference>
<dbReference type="GO" id="GO:0016308">
    <property type="term" value="F:1-phosphatidylinositol-4-phosphate 5-kinase activity"/>
    <property type="evidence" value="ECO:0000318"/>
    <property type="project" value="GO_Central"/>
</dbReference>
<dbReference type="GO" id="GO:0005524">
    <property type="term" value="F:ATP binding"/>
    <property type="evidence" value="ECO:0007669"/>
    <property type="project" value="UniProtKB-KW"/>
</dbReference>
<dbReference type="GO" id="GO:0052742">
    <property type="term" value="F:phosphatidylinositol kinase activity"/>
    <property type="evidence" value="ECO:0000304"/>
    <property type="project" value="Reactome"/>
</dbReference>
<dbReference type="GO" id="GO:0030036">
    <property type="term" value="P:actin cytoskeleton organization"/>
    <property type="evidence" value="ECO:0000304"/>
    <property type="project" value="UniProtKB"/>
</dbReference>
<dbReference type="GO" id="GO:0034333">
    <property type="term" value="P:adherens junction assembly"/>
    <property type="evidence" value="ECO:0000304"/>
    <property type="project" value="UniProtKB"/>
</dbReference>
<dbReference type="GO" id="GO:0098609">
    <property type="term" value="P:cell-cell adhesion"/>
    <property type="evidence" value="ECO:0000304"/>
    <property type="project" value="UniProtKB"/>
</dbReference>
<dbReference type="GO" id="GO:0072583">
    <property type="term" value="P:clathrin-dependent endocytosis"/>
    <property type="evidence" value="ECO:0000304"/>
    <property type="project" value="UniProtKB"/>
</dbReference>
<dbReference type="GO" id="GO:0061024">
    <property type="term" value="P:membrane organization"/>
    <property type="evidence" value="ECO:0000304"/>
    <property type="project" value="Reactome"/>
</dbReference>
<dbReference type="GO" id="GO:0030593">
    <property type="term" value="P:neutrophil chemotaxis"/>
    <property type="evidence" value="ECO:0000304"/>
    <property type="project" value="UniProtKB"/>
</dbReference>
<dbReference type="GO" id="GO:0006909">
    <property type="term" value="P:phagocytosis"/>
    <property type="evidence" value="ECO:0000304"/>
    <property type="project" value="UniProtKB"/>
</dbReference>
<dbReference type="GO" id="GO:0006661">
    <property type="term" value="P:phosphatidylinositol biosynthetic process"/>
    <property type="evidence" value="ECO:0000304"/>
    <property type="project" value="Reactome"/>
</dbReference>
<dbReference type="GO" id="GO:0046854">
    <property type="term" value="P:phosphatidylinositol phosphate biosynthetic process"/>
    <property type="evidence" value="ECO:0000318"/>
    <property type="project" value="GO_Central"/>
</dbReference>
<dbReference type="GO" id="GO:0051896">
    <property type="term" value="P:regulation of phosphatidylinositol 3-kinase/protein kinase B signal transduction"/>
    <property type="evidence" value="ECO:0000304"/>
    <property type="project" value="Reactome"/>
</dbReference>
<dbReference type="GO" id="GO:0048488">
    <property type="term" value="P:synaptic vesicle endocytosis"/>
    <property type="evidence" value="ECO:0000304"/>
    <property type="project" value="UniProtKB"/>
</dbReference>
<dbReference type="GO" id="GO:0016079">
    <property type="term" value="P:synaptic vesicle exocytosis"/>
    <property type="evidence" value="ECO:0000304"/>
    <property type="project" value="UniProtKB"/>
</dbReference>
<dbReference type="CDD" id="cd17308">
    <property type="entry name" value="PIPKc_PIP5K1C"/>
    <property type="match status" value="1"/>
</dbReference>
<dbReference type="FunFam" id="3.30.800.10:FF:000001">
    <property type="entry name" value="phosphatidylinositol 4-phosphate 5-kinase type-1 gamma"/>
    <property type="match status" value="1"/>
</dbReference>
<dbReference type="Gene3D" id="3.30.810.10">
    <property type="entry name" value="2-Layer Sandwich"/>
    <property type="match status" value="1"/>
</dbReference>
<dbReference type="Gene3D" id="3.30.800.10">
    <property type="entry name" value="Phosphatidylinositol Phosphate Kinase II Beta"/>
    <property type="match status" value="1"/>
</dbReference>
<dbReference type="IDEAL" id="IID00359"/>
<dbReference type="InterPro" id="IPR027483">
    <property type="entry name" value="PInositol-4-P-4/5-kinase_C_sf"/>
</dbReference>
<dbReference type="InterPro" id="IPR002498">
    <property type="entry name" value="PInositol-4-P-4/5-kinase_core"/>
</dbReference>
<dbReference type="InterPro" id="IPR027484">
    <property type="entry name" value="PInositol-4-P-5-kinase_N"/>
</dbReference>
<dbReference type="InterPro" id="IPR023610">
    <property type="entry name" value="PInositol-4/5-P-5/4-kinase"/>
</dbReference>
<dbReference type="PANTHER" id="PTHR23086:SF26">
    <property type="entry name" value="PHOSPHATIDYLINOSITOL 4-PHOSPHATE 5-KINASE TYPE-1 GAMMA"/>
    <property type="match status" value="1"/>
</dbReference>
<dbReference type="PANTHER" id="PTHR23086">
    <property type="entry name" value="PHOSPHATIDYLINOSITOL-4-PHOSPHATE 5-KINASE"/>
    <property type="match status" value="1"/>
</dbReference>
<dbReference type="Pfam" id="PF01504">
    <property type="entry name" value="PIP5K"/>
    <property type="match status" value="1"/>
</dbReference>
<dbReference type="SMART" id="SM00330">
    <property type="entry name" value="PIPKc"/>
    <property type="match status" value="1"/>
</dbReference>
<dbReference type="SUPFAM" id="SSF56104">
    <property type="entry name" value="SAICAR synthase-like"/>
    <property type="match status" value="1"/>
</dbReference>
<dbReference type="PROSITE" id="PS51455">
    <property type="entry name" value="PIPK"/>
    <property type="match status" value="1"/>
</dbReference>
<protein>
    <recommendedName>
        <fullName evidence="20">Phosphatidylinositol 4-phosphate 5-kinase type-1 gamma</fullName>
        <shortName evidence="20">PIP5K1gamma</shortName>
        <shortName evidence="20">PtdIns(4)P-5-kinase 1 gamma</shortName>
        <ecNumber evidence="7 15">2.7.1.68</ecNumber>
    </recommendedName>
    <alternativeName>
        <fullName evidence="2">Type I phosphatidylinositol 4-phosphate 5-kinase gamma</fullName>
    </alternativeName>
</protein>
<keyword id="KW-0002">3D-structure</keyword>
<keyword id="KW-0007">Acetylation</keyword>
<keyword id="KW-0025">Alternative splicing</keyword>
<keyword id="KW-0067">ATP-binding</keyword>
<keyword id="KW-0130">Cell adhesion</keyword>
<keyword id="KW-0965">Cell junction</keyword>
<keyword id="KW-1003">Cell membrane</keyword>
<keyword id="KW-0966">Cell projection</keyword>
<keyword id="KW-0145">Chemotaxis</keyword>
<keyword id="KW-0963">Cytoplasm</keyword>
<keyword id="KW-0225">Disease variant</keyword>
<keyword id="KW-0254">Endocytosis</keyword>
<keyword id="KW-0268">Exocytosis</keyword>
<keyword id="KW-0418">Kinase</keyword>
<keyword id="KW-0443">Lipid metabolism</keyword>
<keyword id="KW-0472">Membrane</keyword>
<keyword id="KW-0488">Methylation</keyword>
<keyword id="KW-0547">Nucleotide-binding</keyword>
<keyword id="KW-0539">Nucleus</keyword>
<keyword id="KW-0581">Phagocytosis</keyword>
<keyword id="KW-0597">Phosphoprotein</keyword>
<keyword id="KW-1267">Proteomics identification</keyword>
<keyword id="KW-1185">Reference proteome</keyword>
<keyword id="KW-0808">Transferase</keyword>